<proteinExistence type="inferred from homology"/>
<protein>
    <recommendedName>
        <fullName evidence="1">UPF0149 protein YgfB</fullName>
    </recommendedName>
</protein>
<reference key="1">
    <citation type="journal article" date="2009" name="PLoS Genet.">
        <title>Organised genome dynamics in the Escherichia coli species results in highly diverse adaptive paths.</title>
        <authorList>
            <person name="Touchon M."/>
            <person name="Hoede C."/>
            <person name="Tenaillon O."/>
            <person name="Barbe V."/>
            <person name="Baeriswyl S."/>
            <person name="Bidet P."/>
            <person name="Bingen E."/>
            <person name="Bonacorsi S."/>
            <person name="Bouchier C."/>
            <person name="Bouvet O."/>
            <person name="Calteau A."/>
            <person name="Chiapello H."/>
            <person name="Clermont O."/>
            <person name="Cruveiller S."/>
            <person name="Danchin A."/>
            <person name="Diard M."/>
            <person name="Dossat C."/>
            <person name="Karoui M.E."/>
            <person name="Frapy E."/>
            <person name="Garry L."/>
            <person name="Ghigo J.M."/>
            <person name="Gilles A.M."/>
            <person name="Johnson J."/>
            <person name="Le Bouguenec C."/>
            <person name="Lescat M."/>
            <person name="Mangenot S."/>
            <person name="Martinez-Jehanne V."/>
            <person name="Matic I."/>
            <person name="Nassif X."/>
            <person name="Oztas S."/>
            <person name="Petit M.A."/>
            <person name="Pichon C."/>
            <person name="Rouy Z."/>
            <person name="Ruf C.S."/>
            <person name="Schneider D."/>
            <person name="Tourret J."/>
            <person name="Vacherie B."/>
            <person name="Vallenet D."/>
            <person name="Medigue C."/>
            <person name="Rocha E.P.C."/>
            <person name="Denamur E."/>
        </authorList>
    </citation>
    <scope>NUCLEOTIDE SEQUENCE [LARGE SCALE GENOMIC DNA]</scope>
    <source>
        <strain>ED1a</strain>
    </source>
</reference>
<gene>
    <name evidence="1" type="primary">ygfB</name>
    <name type="ordered locus">ECED1_3368</name>
</gene>
<name>YGFB_ECO81</name>
<organism>
    <name type="scientific">Escherichia coli O81 (strain ED1a)</name>
    <dbReference type="NCBI Taxonomy" id="585397"/>
    <lineage>
        <taxon>Bacteria</taxon>
        <taxon>Pseudomonadati</taxon>
        <taxon>Pseudomonadota</taxon>
        <taxon>Gammaproteobacteria</taxon>
        <taxon>Enterobacterales</taxon>
        <taxon>Enterobacteriaceae</taxon>
        <taxon>Escherichia</taxon>
    </lineage>
</organism>
<sequence length="192" mass="21230">MSIQNEMPGYNEMNQYLNQQGTGLTPAEMHGLISGMICGGNDDSSWLPLLHDLTNEGMAFGHELAQALRKMHSATSDALQDDGFLFQLYLPDGDDVSVFDRADALAGWVNHFLLGLGVTQPKLDKVTGETGEAIDDLRNIAQLGYDEDEDQEELEMSLEEIIEYVRVAALLCHDTFTHPQPTAPEVQKPTLH</sequence>
<comment type="similarity">
    <text evidence="1">Belongs to the UPF0149 family.</text>
</comment>
<accession>B7MZK6</accession>
<evidence type="ECO:0000255" key="1">
    <source>
        <dbReference type="HAMAP-Rule" id="MF_00346"/>
    </source>
</evidence>
<feature type="chain" id="PRO_1000133397" description="UPF0149 protein YgfB">
    <location>
        <begin position="1"/>
        <end position="192"/>
    </location>
</feature>
<dbReference type="EMBL" id="CU928162">
    <property type="protein sequence ID" value="CAR09524.2"/>
    <property type="molecule type" value="Genomic_DNA"/>
</dbReference>
<dbReference type="RefSeq" id="WP_001295378.1">
    <property type="nucleotide sequence ID" value="NC_011745.1"/>
</dbReference>
<dbReference type="SMR" id="B7MZK6"/>
<dbReference type="GeneID" id="93779092"/>
<dbReference type="KEGG" id="ecq:ECED1_3368"/>
<dbReference type="HOGENOM" id="CLU_085336_1_0_6"/>
<dbReference type="Proteomes" id="UP000000748">
    <property type="component" value="Chromosome"/>
</dbReference>
<dbReference type="GO" id="GO:0005829">
    <property type="term" value="C:cytosol"/>
    <property type="evidence" value="ECO:0007669"/>
    <property type="project" value="TreeGrafter"/>
</dbReference>
<dbReference type="FunFam" id="1.20.120.740:FF:000001">
    <property type="entry name" value="UPF0149 protein YgfB"/>
    <property type="match status" value="1"/>
</dbReference>
<dbReference type="Gene3D" id="1.20.120.740">
    <property type="entry name" value="YgfB uncharacterised protein family UPF0149, PF03695"/>
    <property type="match status" value="1"/>
</dbReference>
<dbReference type="HAMAP" id="MF_00346">
    <property type="entry name" value="UPF0149"/>
    <property type="match status" value="1"/>
</dbReference>
<dbReference type="InterPro" id="IPR011978">
    <property type="entry name" value="YgfB-like"/>
</dbReference>
<dbReference type="InterPro" id="IPR036255">
    <property type="entry name" value="YgfB-like_sf"/>
</dbReference>
<dbReference type="NCBIfam" id="NF002477">
    <property type="entry name" value="PRK01736.1"/>
    <property type="match status" value="1"/>
</dbReference>
<dbReference type="NCBIfam" id="TIGR02292">
    <property type="entry name" value="ygfB_yecA"/>
    <property type="match status" value="1"/>
</dbReference>
<dbReference type="PANTHER" id="PTHR37528">
    <property type="entry name" value="UPF0149 PROTEIN YGFB"/>
    <property type="match status" value="1"/>
</dbReference>
<dbReference type="PANTHER" id="PTHR37528:SF1">
    <property type="entry name" value="UPF0149 PROTEIN YGFB"/>
    <property type="match status" value="1"/>
</dbReference>
<dbReference type="Pfam" id="PF03695">
    <property type="entry name" value="UPF0149"/>
    <property type="match status" value="1"/>
</dbReference>
<dbReference type="SUPFAM" id="SSF101327">
    <property type="entry name" value="YgfB-like"/>
    <property type="match status" value="1"/>
</dbReference>